<accession>O27956</accession>
<gene>
    <name type="primary">gatC</name>
    <name type="ordered locus">AF_2328</name>
</gene>
<protein>
    <recommendedName>
        <fullName>Glutamyl-tRNA(Gln) amidotransferase subunit C</fullName>
        <shortName>Glu-ADT subunit C</shortName>
        <ecNumber>6.3.5.-</ecNumber>
    </recommendedName>
</protein>
<reference key="1">
    <citation type="journal article" date="1997" name="Nature">
        <title>The complete genome sequence of the hyperthermophilic, sulphate-reducing archaeon Archaeoglobus fulgidus.</title>
        <authorList>
            <person name="Klenk H.-P."/>
            <person name="Clayton R.A."/>
            <person name="Tomb J.-F."/>
            <person name="White O."/>
            <person name="Nelson K.E."/>
            <person name="Ketchum K.A."/>
            <person name="Dodson R.J."/>
            <person name="Gwinn M.L."/>
            <person name="Hickey E.K."/>
            <person name="Peterson J.D."/>
            <person name="Richardson D.L."/>
            <person name="Kerlavage A.R."/>
            <person name="Graham D.E."/>
            <person name="Kyrpides N.C."/>
            <person name="Fleischmann R.D."/>
            <person name="Quackenbush J."/>
            <person name="Lee N.H."/>
            <person name="Sutton G.G."/>
            <person name="Gill S.R."/>
            <person name="Kirkness E.F."/>
            <person name="Dougherty B.A."/>
            <person name="McKenney K."/>
            <person name="Adams M.D."/>
            <person name="Loftus B.J."/>
            <person name="Peterson S.N."/>
            <person name="Reich C.I."/>
            <person name="McNeil L.K."/>
            <person name="Badger J.H."/>
            <person name="Glodek A."/>
            <person name="Zhou L."/>
            <person name="Overbeek R."/>
            <person name="Gocayne J.D."/>
            <person name="Weidman J.F."/>
            <person name="McDonald L.A."/>
            <person name="Utterback T.R."/>
            <person name="Cotton M.D."/>
            <person name="Spriggs T."/>
            <person name="Artiach P."/>
            <person name="Kaine B.P."/>
            <person name="Sykes S.M."/>
            <person name="Sadow P.W."/>
            <person name="D'Andrea K.P."/>
            <person name="Bowman C."/>
            <person name="Fujii C."/>
            <person name="Garland S.A."/>
            <person name="Mason T.M."/>
            <person name="Olsen G.J."/>
            <person name="Fraser C.M."/>
            <person name="Smith H.O."/>
            <person name="Woese C.R."/>
            <person name="Venter J.C."/>
        </authorList>
    </citation>
    <scope>NUCLEOTIDE SEQUENCE [LARGE SCALE GENOMIC DNA]</scope>
    <source>
        <strain>ATCC 49558 / DSM 4304 / JCM 9628 / NBRC 100126 / VC-16</strain>
    </source>
</reference>
<keyword id="KW-0067">ATP-binding</keyword>
<keyword id="KW-0436">Ligase</keyword>
<keyword id="KW-0547">Nucleotide-binding</keyword>
<keyword id="KW-0648">Protein biosynthesis</keyword>
<keyword id="KW-1185">Reference proteome</keyword>
<organism>
    <name type="scientific">Archaeoglobus fulgidus (strain ATCC 49558 / DSM 4304 / JCM 9628 / NBRC 100126 / VC-16)</name>
    <dbReference type="NCBI Taxonomy" id="224325"/>
    <lineage>
        <taxon>Archaea</taxon>
        <taxon>Methanobacteriati</taxon>
        <taxon>Methanobacteriota</taxon>
        <taxon>Archaeoglobi</taxon>
        <taxon>Archaeoglobales</taxon>
        <taxon>Archaeoglobaceae</taxon>
        <taxon>Archaeoglobus</taxon>
    </lineage>
</organism>
<comment type="function">
    <text evidence="1">Allows the formation of correctly charged Asn-tRNA(Asn) or Gln-tRNA(Gln) through the transamidation of misacylated Asp-tRNA(Asn) or Glu-tRNA(Gln) in organisms which lack either or both of asparaginyl-tRNA or glutaminyl-tRNA synthetases. The reaction takes place in the presence of glutamine and ATP through an activated phospho-Asp-tRNA(Asn) or phospho-Glu-tRNA(Gln) (By similarity).</text>
</comment>
<comment type="catalytic activity">
    <reaction>
        <text>L-glutamyl-tRNA(Gln) + L-glutamine + ATP + H2O = L-glutaminyl-tRNA(Gln) + L-glutamate + ADP + phosphate + H(+)</text>
        <dbReference type="Rhea" id="RHEA:17521"/>
        <dbReference type="Rhea" id="RHEA-COMP:9681"/>
        <dbReference type="Rhea" id="RHEA-COMP:9684"/>
        <dbReference type="ChEBI" id="CHEBI:15377"/>
        <dbReference type="ChEBI" id="CHEBI:15378"/>
        <dbReference type="ChEBI" id="CHEBI:29985"/>
        <dbReference type="ChEBI" id="CHEBI:30616"/>
        <dbReference type="ChEBI" id="CHEBI:43474"/>
        <dbReference type="ChEBI" id="CHEBI:58359"/>
        <dbReference type="ChEBI" id="CHEBI:78520"/>
        <dbReference type="ChEBI" id="CHEBI:78521"/>
        <dbReference type="ChEBI" id="CHEBI:456216"/>
    </reaction>
</comment>
<comment type="catalytic activity">
    <reaction>
        <text>L-aspartyl-tRNA(Asn) + L-glutamine + ATP + H2O = L-asparaginyl-tRNA(Asn) + L-glutamate + ADP + phosphate + 2 H(+)</text>
        <dbReference type="Rhea" id="RHEA:14513"/>
        <dbReference type="Rhea" id="RHEA-COMP:9674"/>
        <dbReference type="Rhea" id="RHEA-COMP:9677"/>
        <dbReference type="ChEBI" id="CHEBI:15377"/>
        <dbReference type="ChEBI" id="CHEBI:15378"/>
        <dbReference type="ChEBI" id="CHEBI:29985"/>
        <dbReference type="ChEBI" id="CHEBI:30616"/>
        <dbReference type="ChEBI" id="CHEBI:43474"/>
        <dbReference type="ChEBI" id="CHEBI:58359"/>
        <dbReference type="ChEBI" id="CHEBI:78515"/>
        <dbReference type="ChEBI" id="CHEBI:78516"/>
        <dbReference type="ChEBI" id="CHEBI:456216"/>
    </reaction>
</comment>
<comment type="subunit">
    <text evidence="1">Heterotrimer of A, B and C subunits.</text>
</comment>
<comment type="similarity">
    <text evidence="2">Belongs to the GatC family.</text>
</comment>
<proteinExistence type="inferred from homology"/>
<evidence type="ECO:0000250" key="1"/>
<evidence type="ECO:0000305" key="2"/>
<feature type="chain" id="PRO_0000105357" description="Glutamyl-tRNA(Gln) amidotransferase subunit C">
    <location>
        <begin position="1"/>
        <end position="93"/>
    </location>
</feature>
<dbReference type="EC" id="6.3.5.-"/>
<dbReference type="EMBL" id="AE000782">
    <property type="protein sequence ID" value="AAB88922.1"/>
    <property type="molecule type" value="Genomic_DNA"/>
</dbReference>
<dbReference type="PIR" id="H69540">
    <property type="entry name" value="H69540"/>
</dbReference>
<dbReference type="RefSeq" id="WP_010879817.1">
    <property type="nucleotide sequence ID" value="NC_000917.1"/>
</dbReference>
<dbReference type="SMR" id="O27956"/>
<dbReference type="STRING" id="224325.AF_2328"/>
<dbReference type="PaxDb" id="224325-AF_2328"/>
<dbReference type="DNASU" id="1485560"/>
<dbReference type="EnsemblBacteria" id="AAB88922">
    <property type="protein sequence ID" value="AAB88922"/>
    <property type="gene ID" value="AF_2328"/>
</dbReference>
<dbReference type="GeneID" id="24796093"/>
<dbReference type="KEGG" id="afu:AF_2328"/>
<dbReference type="eggNOG" id="arCOG02726">
    <property type="taxonomic scope" value="Archaea"/>
</dbReference>
<dbReference type="HOGENOM" id="CLU_105899_1_2_2"/>
<dbReference type="OrthoDB" id="15210at2157"/>
<dbReference type="PhylomeDB" id="O27956"/>
<dbReference type="Proteomes" id="UP000002199">
    <property type="component" value="Chromosome"/>
</dbReference>
<dbReference type="GO" id="GO:0050566">
    <property type="term" value="F:asparaginyl-tRNA synthase (glutamine-hydrolyzing) activity"/>
    <property type="evidence" value="ECO:0007669"/>
    <property type="project" value="RHEA"/>
</dbReference>
<dbReference type="GO" id="GO:0005524">
    <property type="term" value="F:ATP binding"/>
    <property type="evidence" value="ECO:0007669"/>
    <property type="project" value="UniProtKB-KW"/>
</dbReference>
<dbReference type="GO" id="GO:0050567">
    <property type="term" value="F:glutaminyl-tRNA synthase (glutamine-hydrolyzing) activity"/>
    <property type="evidence" value="ECO:0007669"/>
    <property type="project" value="UniProtKB-UniRule"/>
</dbReference>
<dbReference type="GO" id="GO:0070681">
    <property type="term" value="P:glutaminyl-tRNAGln biosynthesis via transamidation"/>
    <property type="evidence" value="ECO:0007669"/>
    <property type="project" value="TreeGrafter"/>
</dbReference>
<dbReference type="GO" id="GO:0006450">
    <property type="term" value="P:regulation of translational fidelity"/>
    <property type="evidence" value="ECO:0007669"/>
    <property type="project" value="InterPro"/>
</dbReference>
<dbReference type="GO" id="GO:0006412">
    <property type="term" value="P:translation"/>
    <property type="evidence" value="ECO:0007669"/>
    <property type="project" value="UniProtKB-UniRule"/>
</dbReference>
<dbReference type="Gene3D" id="1.10.20.60">
    <property type="entry name" value="Glu-tRNAGln amidotransferase C subunit, N-terminal domain"/>
    <property type="match status" value="1"/>
</dbReference>
<dbReference type="HAMAP" id="MF_00122">
    <property type="entry name" value="GatC"/>
    <property type="match status" value="1"/>
</dbReference>
<dbReference type="InterPro" id="IPR036113">
    <property type="entry name" value="Asp/Glu-ADT_sf_sub_c"/>
</dbReference>
<dbReference type="InterPro" id="IPR003837">
    <property type="entry name" value="GatC"/>
</dbReference>
<dbReference type="NCBIfam" id="TIGR00135">
    <property type="entry name" value="gatC"/>
    <property type="match status" value="1"/>
</dbReference>
<dbReference type="PANTHER" id="PTHR15004">
    <property type="entry name" value="GLUTAMYL-TRNA(GLN) AMIDOTRANSFERASE SUBUNIT C, MITOCHONDRIAL"/>
    <property type="match status" value="1"/>
</dbReference>
<dbReference type="PANTHER" id="PTHR15004:SF0">
    <property type="entry name" value="GLUTAMYL-TRNA(GLN) AMIDOTRANSFERASE SUBUNIT C, MITOCHONDRIAL"/>
    <property type="match status" value="1"/>
</dbReference>
<dbReference type="Pfam" id="PF02686">
    <property type="entry name" value="GatC"/>
    <property type="match status" value="1"/>
</dbReference>
<dbReference type="SUPFAM" id="SSF141000">
    <property type="entry name" value="Glu-tRNAGln amidotransferase C subunit"/>
    <property type="match status" value="1"/>
</dbReference>
<sequence length="93" mass="10904">MVSIEDVYHTAELAKIEITEEQAEKFRKEFETILDYFNILDEVEEDVEPTFHVLPLTNVFREDEPGECLKQEEALSNAKHKEEGYFKGPRVVE</sequence>
<name>GATC_ARCFU</name>